<comment type="catalytic activity">
    <reaction evidence="1">
        <text>L-histidinol phosphate + 2-oxoglutarate = 3-(imidazol-4-yl)-2-oxopropyl phosphate + L-glutamate</text>
        <dbReference type="Rhea" id="RHEA:23744"/>
        <dbReference type="ChEBI" id="CHEBI:16810"/>
        <dbReference type="ChEBI" id="CHEBI:29985"/>
        <dbReference type="ChEBI" id="CHEBI:57766"/>
        <dbReference type="ChEBI" id="CHEBI:57980"/>
        <dbReference type="EC" id="2.6.1.9"/>
    </reaction>
</comment>
<comment type="cofactor">
    <cofactor evidence="1">
        <name>pyridoxal 5'-phosphate</name>
        <dbReference type="ChEBI" id="CHEBI:597326"/>
    </cofactor>
</comment>
<comment type="pathway">
    <text evidence="1">Amino-acid biosynthesis; L-histidine biosynthesis; L-histidine from 5-phospho-alpha-D-ribose 1-diphosphate: step 7/9.</text>
</comment>
<comment type="subunit">
    <text evidence="1">Homodimer.</text>
</comment>
<comment type="similarity">
    <text evidence="1">Belongs to the class-II pyridoxal-phosphate-dependent aminotransferase family. Histidinol-phosphate aminotransferase subfamily.</text>
</comment>
<proteinExistence type="inferred from homology"/>
<protein>
    <recommendedName>
        <fullName evidence="1">Histidinol-phosphate aminotransferase</fullName>
        <ecNumber evidence="1">2.6.1.9</ecNumber>
    </recommendedName>
    <alternativeName>
        <fullName evidence="1">Imidazole acetol-phosphate transaminase</fullName>
    </alternativeName>
</protein>
<reference key="1">
    <citation type="journal article" date="2005" name="Science">
        <title>Genome sequence of the PCE-dechlorinating bacterium Dehalococcoides ethenogenes.</title>
        <authorList>
            <person name="Seshadri R."/>
            <person name="Adrian L."/>
            <person name="Fouts D.E."/>
            <person name="Eisen J.A."/>
            <person name="Phillippy A.M."/>
            <person name="Methe B.A."/>
            <person name="Ward N.L."/>
            <person name="Nelson W.C."/>
            <person name="DeBoy R.T."/>
            <person name="Khouri H.M."/>
            <person name="Kolonay J.F."/>
            <person name="Dodson R.J."/>
            <person name="Daugherty S.C."/>
            <person name="Brinkac L.M."/>
            <person name="Sullivan S.A."/>
            <person name="Madupu R."/>
            <person name="Nelson K.E."/>
            <person name="Kang K.H."/>
            <person name="Impraim M."/>
            <person name="Tran K."/>
            <person name="Robinson J.M."/>
            <person name="Forberger H.A."/>
            <person name="Fraser C.M."/>
            <person name="Zinder S.H."/>
            <person name="Heidelberg J.F."/>
        </authorList>
    </citation>
    <scope>NUCLEOTIDE SEQUENCE [LARGE SCALE GENOMIC DNA]</scope>
    <source>
        <strain>ATCC BAA-2266 / KCTC 15142 / 195</strain>
    </source>
</reference>
<sequence>MTYDMKKYIRTDLEGFAGYSACKAPELVKTKNRIIKLDANENLYGAAPTVQKAMSTFDQYHIYPDATQFEIRRLLAEYTGVNMEQIICGAGSDQLIDLLLRLFINPGDEVINCPPTFAMYKFYTDLNRGTVVNVPRDAGYDVNIGGIKNALTPKTKLIFIAAPNNPTGTAISKEDIRQILDLGVPTVIDEAYYEFTGQTMVTDMPSYPNLMILRTFSKWAGLAGLRVGYGLFPPVIADYLSRIKDPYSVNIAADAAVRQTMLQREYMLETVKKIVDERKRLYTELSKFSWLKPYPSAANFILCKLLKGKAKDVQQALESQGILVRCFDAPMMENCLRFSVGKPEDTDALLKALGEMGE</sequence>
<accession>Q3Z879</accession>
<dbReference type="EC" id="2.6.1.9" evidence="1"/>
<dbReference type="EMBL" id="CP000027">
    <property type="protein sequence ID" value="AAW39899.1"/>
    <property type="molecule type" value="Genomic_DNA"/>
</dbReference>
<dbReference type="RefSeq" id="WP_010936571.1">
    <property type="nucleotide sequence ID" value="NC_002936.3"/>
</dbReference>
<dbReference type="SMR" id="Q3Z879"/>
<dbReference type="STRING" id="243164.DET0843"/>
<dbReference type="GeneID" id="3229861"/>
<dbReference type="KEGG" id="det:DET0843"/>
<dbReference type="PATRIC" id="fig|243164.10.peg.801"/>
<dbReference type="eggNOG" id="COG0079">
    <property type="taxonomic scope" value="Bacteria"/>
</dbReference>
<dbReference type="HOGENOM" id="CLU_017584_3_1_0"/>
<dbReference type="InParanoid" id="Q3Z879"/>
<dbReference type="UniPathway" id="UPA00031">
    <property type="reaction ID" value="UER00012"/>
</dbReference>
<dbReference type="Proteomes" id="UP000008289">
    <property type="component" value="Chromosome"/>
</dbReference>
<dbReference type="GO" id="GO:0004400">
    <property type="term" value="F:histidinol-phosphate transaminase activity"/>
    <property type="evidence" value="ECO:0007669"/>
    <property type="project" value="UniProtKB-UniRule"/>
</dbReference>
<dbReference type="GO" id="GO:0030170">
    <property type="term" value="F:pyridoxal phosphate binding"/>
    <property type="evidence" value="ECO:0007669"/>
    <property type="project" value="InterPro"/>
</dbReference>
<dbReference type="GO" id="GO:0000105">
    <property type="term" value="P:L-histidine biosynthetic process"/>
    <property type="evidence" value="ECO:0007669"/>
    <property type="project" value="UniProtKB-UniRule"/>
</dbReference>
<dbReference type="CDD" id="cd00609">
    <property type="entry name" value="AAT_like"/>
    <property type="match status" value="1"/>
</dbReference>
<dbReference type="Gene3D" id="3.90.1150.10">
    <property type="entry name" value="Aspartate Aminotransferase, domain 1"/>
    <property type="match status" value="1"/>
</dbReference>
<dbReference type="Gene3D" id="3.40.640.10">
    <property type="entry name" value="Type I PLP-dependent aspartate aminotransferase-like (Major domain)"/>
    <property type="match status" value="1"/>
</dbReference>
<dbReference type="HAMAP" id="MF_01023">
    <property type="entry name" value="HisC_aminotrans_2"/>
    <property type="match status" value="1"/>
</dbReference>
<dbReference type="InterPro" id="IPR004839">
    <property type="entry name" value="Aminotransferase_I/II_large"/>
</dbReference>
<dbReference type="InterPro" id="IPR005861">
    <property type="entry name" value="HisP_aminotrans"/>
</dbReference>
<dbReference type="InterPro" id="IPR015424">
    <property type="entry name" value="PyrdxlP-dep_Trfase"/>
</dbReference>
<dbReference type="InterPro" id="IPR015421">
    <property type="entry name" value="PyrdxlP-dep_Trfase_major"/>
</dbReference>
<dbReference type="InterPro" id="IPR015422">
    <property type="entry name" value="PyrdxlP-dep_Trfase_small"/>
</dbReference>
<dbReference type="NCBIfam" id="TIGR01141">
    <property type="entry name" value="hisC"/>
    <property type="match status" value="1"/>
</dbReference>
<dbReference type="PANTHER" id="PTHR42885:SF2">
    <property type="entry name" value="HISTIDINOL-PHOSPHATE AMINOTRANSFERASE"/>
    <property type="match status" value="1"/>
</dbReference>
<dbReference type="PANTHER" id="PTHR42885">
    <property type="entry name" value="HISTIDINOL-PHOSPHATE AMINOTRANSFERASE-RELATED"/>
    <property type="match status" value="1"/>
</dbReference>
<dbReference type="Pfam" id="PF00155">
    <property type="entry name" value="Aminotran_1_2"/>
    <property type="match status" value="1"/>
</dbReference>
<dbReference type="SUPFAM" id="SSF53383">
    <property type="entry name" value="PLP-dependent transferases"/>
    <property type="match status" value="1"/>
</dbReference>
<gene>
    <name evidence="1" type="primary">hisC</name>
    <name type="ordered locus">DET0843</name>
</gene>
<feature type="chain" id="PRO_0000153354" description="Histidinol-phosphate aminotransferase">
    <location>
        <begin position="1"/>
        <end position="358"/>
    </location>
</feature>
<feature type="modified residue" description="N6-(pyridoxal phosphate)lysine" evidence="1">
    <location>
        <position position="218"/>
    </location>
</feature>
<name>HIS8_DEHM1</name>
<keyword id="KW-0028">Amino-acid biosynthesis</keyword>
<keyword id="KW-0032">Aminotransferase</keyword>
<keyword id="KW-0368">Histidine biosynthesis</keyword>
<keyword id="KW-0663">Pyridoxal phosphate</keyword>
<keyword id="KW-0808">Transferase</keyword>
<organism>
    <name type="scientific">Dehalococcoides mccartyi (strain ATCC BAA-2266 / KCTC 15142 / 195)</name>
    <name type="common">Dehalococcoides ethenogenes (strain 195)</name>
    <dbReference type="NCBI Taxonomy" id="243164"/>
    <lineage>
        <taxon>Bacteria</taxon>
        <taxon>Bacillati</taxon>
        <taxon>Chloroflexota</taxon>
        <taxon>Dehalococcoidia</taxon>
        <taxon>Dehalococcoidales</taxon>
        <taxon>Dehalococcoidaceae</taxon>
        <taxon>Dehalococcoides</taxon>
    </lineage>
</organism>
<evidence type="ECO:0000255" key="1">
    <source>
        <dbReference type="HAMAP-Rule" id="MF_01023"/>
    </source>
</evidence>